<evidence type="ECO:0000255" key="1">
    <source>
        <dbReference type="HAMAP-Rule" id="MF_00454"/>
    </source>
</evidence>
<accession>Q49YL3</accession>
<reference key="1">
    <citation type="journal article" date="2005" name="Proc. Natl. Acad. Sci. U.S.A.">
        <title>Whole genome sequence of Staphylococcus saprophyticus reveals the pathogenesis of uncomplicated urinary tract infection.</title>
        <authorList>
            <person name="Kuroda M."/>
            <person name="Yamashita A."/>
            <person name="Hirakawa H."/>
            <person name="Kumano M."/>
            <person name="Morikawa K."/>
            <person name="Higashide M."/>
            <person name="Maruyama A."/>
            <person name="Inose Y."/>
            <person name="Matoba K."/>
            <person name="Toh H."/>
            <person name="Kuhara S."/>
            <person name="Hattori M."/>
            <person name="Ohta T."/>
        </authorList>
    </citation>
    <scope>NUCLEOTIDE SEQUENCE [LARGE SCALE GENOMIC DNA]</scope>
    <source>
        <strain>ATCC 15305 / DSM 20229 / NCIMB 8711 / NCTC 7292 / S-41</strain>
    </source>
</reference>
<gene>
    <name evidence="1" type="primary">fluC1</name>
    <name evidence="1" type="synonym">crcB1</name>
    <name type="ordered locus">SSP0979</name>
</gene>
<name>FLUC1_STAS1</name>
<proteinExistence type="inferred from homology"/>
<feature type="chain" id="PRO_0000252948" description="Fluoride-specific ion channel FluC 1">
    <location>
        <begin position="1"/>
        <end position="118"/>
    </location>
</feature>
<feature type="transmembrane region" description="Helical" evidence="1">
    <location>
        <begin position="1"/>
        <end position="21"/>
    </location>
</feature>
<feature type="transmembrane region" description="Helical" evidence="1">
    <location>
        <begin position="29"/>
        <end position="49"/>
    </location>
</feature>
<feature type="transmembrane region" description="Helical" evidence="1">
    <location>
        <begin position="95"/>
        <end position="115"/>
    </location>
</feature>
<feature type="binding site" evidence="1">
    <location>
        <position position="71"/>
    </location>
    <ligand>
        <name>Na(+)</name>
        <dbReference type="ChEBI" id="CHEBI:29101"/>
        <note>structural</note>
    </ligand>
</feature>
<feature type="binding site" evidence="1">
    <location>
        <position position="74"/>
    </location>
    <ligand>
        <name>Na(+)</name>
        <dbReference type="ChEBI" id="CHEBI:29101"/>
        <note>structural</note>
    </ligand>
</feature>
<dbReference type="EMBL" id="AP008934">
    <property type="protein sequence ID" value="BAE18124.1"/>
    <property type="molecule type" value="Genomic_DNA"/>
</dbReference>
<dbReference type="RefSeq" id="WP_011302833.1">
    <property type="nucleotide sequence ID" value="NC_007350.1"/>
</dbReference>
<dbReference type="SMR" id="Q49YL3"/>
<dbReference type="GeneID" id="3615849"/>
<dbReference type="KEGG" id="ssp:SSP0979"/>
<dbReference type="PATRIC" id="fig|342451.11.peg.980"/>
<dbReference type="eggNOG" id="COG0239">
    <property type="taxonomic scope" value="Bacteria"/>
</dbReference>
<dbReference type="HOGENOM" id="CLU_114342_2_3_9"/>
<dbReference type="OrthoDB" id="9815830at2"/>
<dbReference type="Proteomes" id="UP000006371">
    <property type="component" value="Chromosome"/>
</dbReference>
<dbReference type="GO" id="GO:0005886">
    <property type="term" value="C:plasma membrane"/>
    <property type="evidence" value="ECO:0007669"/>
    <property type="project" value="UniProtKB-SubCell"/>
</dbReference>
<dbReference type="GO" id="GO:0062054">
    <property type="term" value="F:fluoride channel activity"/>
    <property type="evidence" value="ECO:0007669"/>
    <property type="project" value="UniProtKB-UniRule"/>
</dbReference>
<dbReference type="GO" id="GO:0046872">
    <property type="term" value="F:metal ion binding"/>
    <property type="evidence" value="ECO:0007669"/>
    <property type="project" value="UniProtKB-KW"/>
</dbReference>
<dbReference type="GO" id="GO:0140114">
    <property type="term" value="P:cellular detoxification of fluoride"/>
    <property type="evidence" value="ECO:0007669"/>
    <property type="project" value="UniProtKB-UniRule"/>
</dbReference>
<dbReference type="HAMAP" id="MF_00454">
    <property type="entry name" value="FluC"/>
    <property type="match status" value="1"/>
</dbReference>
<dbReference type="InterPro" id="IPR003691">
    <property type="entry name" value="FluC"/>
</dbReference>
<dbReference type="PANTHER" id="PTHR28259">
    <property type="entry name" value="FLUORIDE EXPORT PROTEIN 1-RELATED"/>
    <property type="match status" value="1"/>
</dbReference>
<dbReference type="PANTHER" id="PTHR28259:SF16">
    <property type="entry name" value="FLUORIDE-SPECIFIC ION CHANNEL FLUC 2"/>
    <property type="match status" value="1"/>
</dbReference>
<dbReference type="Pfam" id="PF02537">
    <property type="entry name" value="CRCB"/>
    <property type="match status" value="1"/>
</dbReference>
<protein>
    <recommendedName>
        <fullName evidence="1">Fluoride-specific ion channel FluC 1</fullName>
    </recommendedName>
</protein>
<organism>
    <name type="scientific">Staphylococcus saprophyticus subsp. saprophyticus (strain ATCC 15305 / DSM 20229 / NCIMB 8711 / NCTC 7292 / S-41)</name>
    <dbReference type="NCBI Taxonomy" id="342451"/>
    <lineage>
        <taxon>Bacteria</taxon>
        <taxon>Bacillati</taxon>
        <taxon>Bacillota</taxon>
        <taxon>Bacilli</taxon>
        <taxon>Bacillales</taxon>
        <taxon>Staphylococcaceae</taxon>
        <taxon>Staphylococcus</taxon>
    </lineage>
</organism>
<comment type="function">
    <text evidence="1">Fluoride-specific ion channel. Important for reducing fluoride concentration in the cell, thus reducing its toxicity.</text>
</comment>
<comment type="catalytic activity">
    <reaction evidence="1">
        <text>fluoride(in) = fluoride(out)</text>
        <dbReference type="Rhea" id="RHEA:76159"/>
        <dbReference type="ChEBI" id="CHEBI:17051"/>
    </reaction>
    <physiologicalReaction direction="left-to-right" evidence="1">
        <dbReference type="Rhea" id="RHEA:76160"/>
    </physiologicalReaction>
</comment>
<comment type="activity regulation">
    <text evidence="1">Na(+) is not transported, but it plays an essential structural role and its presence is essential for fluoride channel function.</text>
</comment>
<comment type="subcellular location">
    <subcellularLocation>
        <location evidence="1">Cell membrane</location>
        <topology evidence="1">Multi-pass membrane protein</topology>
    </subcellularLocation>
</comment>
<comment type="similarity">
    <text evidence="1">Belongs to the fluoride channel Fluc/FEX (TC 1.A.43) family.</text>
</comment>
<keyword id="KW-1003">Cell membrane</keyword>
<keyword id="KW-0407">Ion channel</keyword>
<keyword id="KW-0406">Ion transport</keyword>
<keyword id="KW-0472">Membrane</keyword>
<keyword id="KW-0479">Metal-binding</keyword>
<keyword id="KW-1185">Reference proteome</keyword>
<keyword id="KW-0915">Sodium</keyword>
<keyword id="KW-0812">Transmembrane</keyword>
<keyword id="KW-1133">Transmembrane helix</keyword>
<keyword id="KW-0813">Transport</keyword>
<sequence>MIQCILVMLGGGIGAVIRGFVTDVFNQKFNTSLPIPTLLINVVGSFCIGLLMGMCLNINWINPFIIVGILGGLTTFSTLSSELVKLLTTPKQINLFILYSILQYGVSFVACLLGYYLF</sequence>